<gene>
    <name evidence="1" type="primary">cysS</name>
    <name type="ordered locus">Mlg_1810</name>
</gene>
<comment type="catalytic activity">
    <reaction evidence="1">
        <text>tRNA(Cys) + L-cysteine + ATP = L-cysteinyl-tRNA(Cys) + AMP + diphosphate</text>
        <dbReference type="Rhea" id="RHEA:17773"/>
        <dbReference type="Rhea" id="RHEA-COMP:9661"/>
        <dbReference type="Rhea" id="RHEA-COMP:9679"/>
        <dbReference type="ChEBI" id="CHEBI:30616"/>
        <dbReference type="ChEBI" id="CHEBI:33019"/>
        <dbReference type="ChEBI" id="CHEBI:35235"/>
        <dbReference type="ChEBI" id="CHEBI:78442"/>
        <dbReference type="ChEBI" id="CHEBI:78517"/>
        <dbReference type="ChEBI" id="CHEBI:456215"/>
        <dbReference type="EC" id="6.1.1.16"/>
    </reaction>
</comment>
<comment type="cofactor">
    <cofactor evidence="1">
        <name>Zn(2+)</name>
        <dbReference type="ChEBI" id="CHEBI:29105"/>
    </cofactor>
    <text evidence="1">Binds 1 zinc ion per subunit.</text>
</comment>
<comment type="subunit">
    <text evidence="1">Monomer.</text>
</comment>
<comment type="subcellular location">
    <subcellularLocation>
        <location evidence="1">Cytoplasm</location>
    </subcellularLocation>
</comment>
<comment type="similarity">
    <text evidence="1">Belongs to the class-I aminoacyl-tRNA synthetase family.</text>
</comment>
<comment type="sequence caution" evidence="2">
    <conflict type="erroneous initiation">
        <sequence resource="EMBL-CDS" id="ABI57154"/>
    </conflict>
</comment>
<evidence type="ECO:0000255" key="1">
    <source>
        <dbReference type="HAMAP-Rule" id="MF_00041"/>
    </source>
</evidence>
<evidence type="ECO:0000305" key="2"/>
<dbReference type="EC" id="6.1.1.16" evidence="1"/>
<dbReference type="EMBL" id="CP000453">
    <property type="protein sequence ID" value="ABI57154.1"/>
    <property type="status" value="ALT_INIT"/>
    <property type="molecule type" value="Genomic_DNA"/>
</dbReference>
<dbReference type="RefSeq" id="WP_041717996.1">
    <property type="nucleotide sequence ID" value="NC_008340.1"/>
</dbReference>
<dbReference type="SMR" id="Q0A7N3"/>
<dbReference type="KEGG" id="aeh:Mlg_1810"/>
<dbReference type="eggNOG" id="COG0215">
    <property type="taxonomic scope" value="Bacteria"/>
</dbReference>
<dbReference type="HOGENOM" id="CLU_013528_0_1_6"/>
<dbReference type="OrthoDB" id="9815130at2"/>
<dbReference type="Proteomes" id="UP000001962">
    <property type="component" value="Chromosome"/>
</dbReference>
<dbReference type="GO" id="GO:0005829">
    <property type="term" value="C:cytosol"/>
    <property type="evidence" value="ECO:0007669"/>
    <property type="project" value="TreeGrafter"/>
</dbReference>
<dbReference type="GO" id="GO:0005524">
    <property type="term" value="F:ATP binding"/>
    <property type="evidence" value="ECO:0007669"/>
    <property type="project" value="UniProtKB-UniRule"/>
</dbReference>
<dbReference type="GO" id="GO:0004817">
    <property type="term" value="F:cysteine-tRNA ligase activity"/>
    <property type="evidence" value="ECO:0007669"/>
    <property type="project" value="UniProtKB-UniRule"/>
</dbReference>
<dbReference type="GO" id="GO:0008270">
    <property type="term" value="F:zinc ion binding"/>
    <property type="evidence" value="ECO:0007669"/>
    <property type="project" value="UniProtKB-UniRule"/>
</dbReference>
<dbReference type="GO" id="GO:0006423">
    <property type="term" value="P:cysteinyl-tRNA aminoacylation"/>
    <property type="evidence" value="ECO:0007669"/>
    <property type="project" value="UniProtKB-UniRule"/>
</dbReference>
<dbReference type="CDD" id="cd07963">
    <property type="entry name" value="Anticodon_Ia_Cys"/>
    <property type="match status" value="1"/>
</dbReference>
<dbReference type="CDD" id="cd00672">
    <property type="entry name" value="CysRS_core"/>
    <property type="match status" value="1"/>
</dbReference>
<dbReference type="FunFam" id="3.40.50.620:FF:000009">
    <property type="entry name" value="Cysteine--tRNA ligase"/>
    <property type="match status" value="1"/>
</dbReference>
<dbReference type="Gene3D" id="1.20.120.1910">
    <property type="entry name" value="Cysteine-tRNA ligase, C-terminal anti-codon recognition domain"/>
    <property type="match status" value="1"/>
</dbReference>
<dbReference type="Gene3D" id="3.40.50.620">
    <property type="entry name" value="HUPs"/>
    <property type="match status" value="1"/>
</dbReference>
<dbReference type="HAMAP" id="MF_00041">
    <property type="entry name" value="Cys_tRNA_synth"/>
    <property type="match status" value="1"/>
</dbReference>
<dbReference type="InterPro" id="IPR015803">
    <property type="entry name" value="Cys-tRNA-ligase"/>
</dbReference>
<dbReference type="InterPro" id="IPR015273">
    <property type="entry name" value="Cys-tRNA-synt_Ia_DALR"/>
</dbReference>
<dbReference type="InterPro" id="IPR024909">
    <property type="entry name" value="Cys-tRNA/MSH_ligase"/>
</dbReference>
<dbReference type="InterPro" id="IPR056411">
    <property type="entry name" value="CysS_C"/>
</dbReference>
<dbReference type="InterPro" id="IPR014729">
    <property type="entry name" value="Rossmann-like_a/b/a_fold"/>
</dbReference>
<dbReference type="InterPro" id="IPR032678">
    <property type="entry name" value="tRNA-synt_1_cat_dom"/>
</dbReference>
<dbReference type="InterPro" id="IPR009080">
    <property type="entry name" value="tRNAsynth_Ia_anticodon-bd"/>
</dbReference>
<dbReference type="NCBIfam" id="TIGR00435">
    <property type="entry name" value="cysS"/>
    <property type="match status" value="1"/>
</dbReference>
<dbReference type="PANTHER" id="PTHR10890:SF3">
    <property type="entry name" value="CYSTEINE--TRNA LIGASE, CYTOPLASMIC"/>
    <property type="match status" value="1"/>
</dbReference>
<dbReference type="PANTHER" id="PTHR10890">
    <property type="entry name" value="CYSTEINYL-TRNA SYNTHETASE"/>
    <property type="match status" value="1"/>
</dbReference>
<dbReference type="Pfam" id="PF23493">
    <property type="entry name" value="CysS_C"/>
    <property type="match status" value="1"/>
</dbReference>
<dbReference type="Pfam" id="PF09190">
    <property type="entry name" value="DALR_2"/>
    <property type="match status" value="1"/>
</dbReference>
<dbReference type="Pfam" id="PF01406">
    <property type="entry name" value="tRNA-synt_1e"/>
    <property type="match status" value="1"/>
</dbReference>
<dbReference type="PRINTS" id="PR00983">
    <property type="entry name" value="TRNASYNTHCYS"/>
</dbReference>
<dbReference type="SMART" id="SM00840">
    <property type="entry name" value="DALR_2"/>
    <property type="match status" value="1"/>
</dbReference>
<dbReference type="SUPFAM" id="SSF47323">
    <property type="entry name" value="Anticodon-binding domain of a subclass of class I aminoacyl-tRNA synthetases"/>
    <property type="match status" value="1"/>
</dbReference>
<dbReference type="SUPFAM" id="SSF52374">
    <property type="entry name" value="Nucleotidylyl transferase"/>
    <property type="match status" value="1"/>
</dbReference>
<accession>Q0A7N3</accession>
<name>SYC_ALKEH</name>
<keyword id="KW-0030">Aminoacyl-tRNA synthetase</keyword>
<keyword id="KW-0067">ATP-binding</keyword>
<keyword id="KW-0963">Cytoplasm</keyword>
<keyword id="KW-0436">Ligase</keyword>
<keyword id="KW-0479">Metal-binding</keyword>
<keyword id="KW-0547">Nucleotide-binding</keyword>
<keyword id="KW-0648">Protein biosynthesis</keyword>
<keyword id="KW-1185">Reference proteome</keyword>
<keyword id="KW-0862">Zinc</keyword>
<proteinExistence type="inferred from homology"/>
<sequence length="462" mass="51887">MLHIHNSLTQRKERFEPIQPGHVRMYVCGMTVYDYCHLGHARALVVFDMVARYLRHLGYRVTFVRNITDIDDKIIRRAAELGEPMGAVTERFIRAMHEDAEALGVLPPDHEPRATGHIDDIIAMIERLVERGHAYVADDGDVYFAVSSYPEYGKLSGERQEDLRAGARVEVDEGKRDPVDFALWKAARPGEPAWPSPWGEGRPGWHIECSAMSTQVLGDHFDIHGGGLDLKFPHHENEIAQSECATGHPFVNYWMHNGHVRINDEKMAKSLGNFFTVREVLSEHRAEAVRLFLLSSHYRSPLNYSLDGLRQAQGALERLYLALRGLPEAPVPEADPQGFRARFHAAMDDDFNTPEALAVLFELAREVNRLRQGDDDAGAAAPGALLRVLGGVLGLLQDDPERFLRGGDAGGDEDAEIDALVARRTEARKNRDFAEADRIRDELAERGIILEDGPQGTTWRRE</sequence>
<reference key="1">
    <citation type="submission" date="2006-08" db="EMBL/GenBank/DDBJ databases">
        <title>Complete sequence of Alkalilimnicola ehrilichei MLHE-1.</title>
        <authorList>
            <person name="Copeland A."/>
            <person name="Lucas S."/>
            <person name="Lapidus A."/>
            <person name="Barry K."/>
            <person name="Detter J.C."/>
            <person name="Glavina del Rio T."/>
            <person name="Hammon N."/>
            <person name="Israni S."/>
            <person name="Dalin E."/>
            <person name="Tice H."/>
            <person name="Pitluck S."/>
            <person name="Sims D."/>
            <person name="Brettin T."/>
            <person name="Bruce D."/>
            <person name="Han C."/>
            <person name="Tapia R."/>
            <person name="Gilna P."/>
            <person name="Schmutz J."/>
            <person name="Larimer F."/>
            <person name="Land M."/>
            <person name="Hauser L."/>
            <person name="Kyrpides N."/>
            <person name="Mikhailova N."/>
            <person name="Oremland R.S."/>
            <person name="Hoeft S.E."/>
            <person name="Switzer-Blum J."/>
            <person name="Kulp T."/>
            <person name="King G."/>
            <person name="Tabita R."/>
            <person name="Witte B."/>
            <person name="Santini J.M."/>
            <person name="Basu P."/>
            <person name="Hollibaugh J.T."/>
            <person name="Xie G."/>
            <person name="Stolz J.F."/>
            <person name="Richardson P."/>
        </authorList>
    </citation>
    <scope>NUCLEOTIDE SEQUENCE [LARGE SCALE GENOMIC DNA]</scope>
    <source>
        <strain>ATCC BAA-1101 / DSM 17681 / MLHE-1</strain>
    </source>
</reference>
<organism>
    <name type="scientific">Alkalilimnicola ehrlichii (strain ATCC BAA-1101 / DSM 17681 / MLHE-1)</name>
    <dbReference type="NCBI Taxonomy" id="187272"/>
    <lineage>
        <taxon>Bacteria</taxon>
        <taxon>Pseudomonadati</taxon>
        <taxon>Pseudomonadota</taxon>
        <taxon>Gammaproteobacteria</taxon>
        <taxon>Chromatiales</taxon>
        <taxon>Ectothiorhodospiraceae</taxon>
        <taxon>Alkalilimnicola</taxon>
    </lineage>
</organism>
<protein>
    <recommendedName>
        <fullName evidence="1">Cysteine--tRNA ligase</fullName>
        <ecNumber evidence="1">6.1.1.16</ecNumber>
    </recommendedName>
    <alternativeName>
        <fullName evidence="1">Cysteinyl-tRNA synthetase</fullName>
        <shortName evidence="1">CysRS</shortName>
    </alternativeName>
</protein>
<feature type="chain" id="PRO_0000332783" description="Cysteine--tRNA ligase">
    <location>
        <begin position="1"/>
        <end position="462"/>
    </location>
</feature>
<feature type="short sequence motif" description="'HIGH' region">
    <location>
        <begin position="30"/>
        <end position="40"/>
    </location>
</feature>
<feature type="short sequence motif" description="'KMSKS' region">
    <location>
        <begin position="266"/>
        <end position="270"/>
    </location>
</feature>
<feature type="binding site" evidence="1">
    <location>
        <position position="28"/>
    </location>
    <ligand>
        <name>Zn(2+)</name>
        <dbReference type="ChEBI" id="CHEBI:29105"/>
    </ligand>
</feature>
<feature type="binding site" evidence="1">
    <location>
        <position position="209"/>
    </location>
    <ligand>
        <name>Zn(2+)</name>
        <dbReference type="ChEBI" id="CHEBI:29105"/>
    </ligand>
</feature>
<feature type="binding site" evidence="1">
    <location>
        <position position="234"/>
    </location>
    <ligand>
        <name>Zn(2+)</name>
        <dbReference type="ChEBI" id="CHEBI:29105"/>
    </ligand>
</feature>
<feature type="binding site" evidence="1">
    <location>
        <position position="238"/>
    </location>
    <ligand>
        <name>Zn(2+)</name>
        <dbReference type="ChEBI" id="CHEBI:29105"/>
    </ligand>
</feature>
<feature type="binding site" evidence="1">
    <location>
        <position position="269"/>
    </location>
    <ligand>
        <name>ATP</name>
        <dbReference type="ChEBI" id="CHEBI:30616"/>
    </ligand>
</feature>